<proteinExistence type="evidence at protein level"/>
<sequence>MKAMILAAGKGERMRPLTLHTPKPLVPVAGQPLIEYHLRALAAAGVTEVVINHAWLGQQIEDHLGDGSRFGLSIRYSPEGEPLETGGGIFKALPLLGDAPFLLVNGDVWTDYDFARLQAPLQGLAHLVLVDNPGHHGRGDFRLVGEQVVDGDDAPGTLTFSGISVLHPALFEGCQAGAFKLAPLLRQAMAAGKVSGEHYRGHWVDVGTLERLAEAESLIGERA</sequence>
<protein>
    <recommendedName>
        <fullName evidence="3">N-acetylmuramate alpha-1-phosphate uridylyltransferase</fullName>
        <shortName evidence="3">MurNAc-1P uridylyltransferase</shortName>
        <shortName evidence="3">MurNAc-alpha-1P uridylyltransferase</shortName>
        <ecNumber evidence="1 2">2.7.7.99</ecNumber>
    </recommendedName>
</protein>
<dbReference type="EC" id="2.7.7.99" evidence="1 2"/>
<dbReference type="EMBL" id="AE015451">
    <property type="protein sequence ID" value="AAN66036.1"/>
    <property type="molecule type" value="Genomic_DNA"/>
</dbReference>
<dbReference type="RefSeq" id="NP_742572.1">
    <property type="nucleotide sequence ID" value="NC_002947.4"/>
</dbReference>
<dbReference type="RefSeq" id="WP_010951745.1">
    <property type="nucleotide sequence ID" value="NZ_CP169744.1"/>
</dbReference>
<dbReference type="PDB" id="4Y7T">
    <property type="method" value="X-ray"/>
    <property type="resolution" value="1.80 A"/>
    <property type="chains" value="A=1-223"/>
</dbReference>
<dbReference type="PDB" id="4Y7U">
    <property type="method" value="X-ray"/>
    <property type="resolution" value="1.70 A"/>
    <property type="chains" value="A=1-223"/>
</dbReference>
<dbReference type="PDB" id="4Y7V">
    <property type="method" value="X-ray"/>
    <property type="resolution" value="1.80 A"/>
    <property type="chains" value="A=1-223"/>
</dbReference>
<dbReference type="PDBsum" id="4Y7T"/>
<dbReference type="PDBsum" id="4Y7U"/>
<dbReference type="PDBsum" id="4Y7V"/>
<dbReference type="SMR" id="Q88QT2"/>
<dbReference type="STRING" id="160488.PP_0406"/>
<dbReference type="PaxDb" id="160488-PP_0406"/>
<dbReference type="GeneID" id="83677698"/>
<dbReference type="KEGG" id="ppu:PP_0406"/>
<dbReference type="PATRIC" id="fig|160488.4.peg.438"/>
<dbReference type="eggNOG" id="COG1208">
    <property type="taxonomic scope" value="Bacteria"/>
</dbReference>
<dbReference type="HOGENOM" id="CLU_029499_2_1_6"/>
<dbReference type="OrthoDB" id="9788272at2"/>
<dbReference type="PhylomeDB" id="Q88QT2"/>
<dbReference type="BioCyc" id="MetaCyc:G1G01-443-MONOMER"/>
<dbReference type="BioCyc" id="PPUT160488:G1G01-443-MONOMER"/>
<dbReference type="BRENDA" id="2.7.7.99">
    <property type="organism ID" value="5092"/>
</dbReference>
<dbReference type="UniPathway" id="UPA00544"/>
<dbReference type="EvolutionaryTrace" id="Q88QT2"/>
<dbReference type="Proteomes" id="UP000000556">
    <property type="component" value="Chromosome"/>
</dbReference>
<dbReference type="GO" id="GO:0097367">
    <property type="term" value="F:carbohydrate derivative binding"/>
    <property type="evidence" value="ECO:0000314"/>
    <property type="project" value="UniProtKB"/>
</dbReference>
<dbReference type="GO" id="GO:0000287">
    <property type="term" value="F:magnesium ion binding"/>
    <property type="evidence" value="ECO:0000314"/>
    <property type="project" value="UniProtKB"/>
</dbReference>
<dbReference type="GO" id="GO:0070569">
    <property type="term" value="F:uridylyltransferase activity"/>
    <property type="evidence" value="ECO:0000314"/>
    <property type="project" value="UniProtKB"/>
</dbReference>
<dbReference type="GO" id="GO:0002134">
    <property type="term" value="F:UTP binding"/>
    <property type="evidence" value="ECO:0000314"/>
    <property type="project" value="UniProtKB"/>
</dbReference>
<dbReference type="GO" id="GO:0071555">
    <property type="term" value="P:cell wall organization"/>
    <property type="evidence" value="ECO:0007669"/>
    <property type="project" value="UniProtKB-KW"/>
</dbReference>
<dbReference type="GO" id="GO:0097172">
    <property type="term" value="P:N-acetylmuramic acid metabolic process"/>
    <property type="evidence" value="ECO:0000315"/>
    <property type="project" value="UniProtKB"/>
</dbReference>
<dbReference type="GO" id="GO:0009252">
    <property type="term" value="P:peptidoglycan biosynthetic process"/>
    <property type="evidence" value="ECO:0007669"/>
    <property type="project" value="UniProtKB-KW"/>
</dbReference>
<dbReference type="GO" id="GO:0009254">
    <property type="term" value="P:peptidoglycan turnover"/>
    <property type="evidence" value="ECO:0000315"/>
    <property type="project" value="UniProtKB"/>
</dbReference>
<dbReference type="GO" id="GO:0008360">
    <property type="term" value="P:regulation of cell shape"/>
    <property type="evidence" value="ECO:0007669"/>
    <property type="project" value="UniProtKB-KW"/>
</dbReference>
<dbReference type="GO" id="GO:0046677">
    <property type="term" value="P:response to antibiotic"/>
    <property type="evidence" value="ECO:0007669"/>
    <property type="project" value="UniProtKB-KW"/>
</dbReference>
<dbReference type="CDD" id="cd06422">
    <property type="entry name" value="NTP_transferase_like_1"/>
    <property type="match status" value="1"/>
</dbReference>
<dbReference type="FunFam" id="3.90.550.10:FF:000254">
    <property type="entry name" value="N-acetylmuramate alpha-1-phosphate uridylyltransferase"/>
    <property type="match status" value="1"/>
</dbReference>
<dbReference type="Gene3D" id="3.90.550.10">
    <property type="entry name" value="Spore Coat Polysaccharide Biosynthesis Protein SpsA, Chain A"/>
    <property type="match status" value="1"/>
</dbReference>
<dbReference type="InterPro" id="IPR050065">
    <property type="entry name" value="GlmU-like"/>
</dbReference>
<dbReference type="InterPro" id="IPR054790">
    <property type="entry name" value="MurU"/>
</dbReference>
<dbReference type="InterPro" id="IPR005835">
    <property type="entry name" value="NTP_transferase_dom"/>
</dbReference>
<dbReference type="InterPro" id="IPR029044">
    <property type="entry name" value="Nucleotide-diphossugar_trans"/>
</dbReference>
<dbReference type="NCBIfam" id="NF045761">
    <property type="entry name" value="NAMPUrTaseMurU"/>
    <property type="match status" value="1"/>
</dbReference>
<dbReference type="PANTHER" id="PTHR43584:SF8">
    <property type="entry name" value="N-ACETYLMURAMATE ALPHA-1-PHOSPHATE URIDYLYLTRANSFERASE"/>
    <property type="match status" value="1"/>
</dbReference>
<dbReference type="PANTHER" id="PTHR43584">
    <property type="entry name" value="NUCLEOTIDYL TRANSFERASE"/>
    <property type="match status" value="1"/>
</dbReference>
<dbReference type="Pfam" id="PF00483">
    <property type="entry name" value="NTP_transferase"/>
    <property type="match status" value="1"/>
</dbReference>
<dbReference type="SUPFAM" id="SSF53448">
    <property type="entry name" value="Nucleotide-diphospho-sugar transferases"/>
    <property type="match status" value="1"/>
</dbReference>
<keyword id="KW-0002">3D-structure</keyword>
<keyword id="KW-0046">Antibiotic resistance</keyword>
<keyword id="KW-0119">Carbohydrate metabolism</keyword>
<keyword id="KW-0133">Cell shape</keyword>
<keyword id="KW-0961">Cell wall biogenesis/degradation</keyword>
<keyword id="KW-0460">Magnesium</keyword>
<keyword id="KW-0479">Metal-binding</keyword>
<keyword id="KW-0548">Nucleotidyltransferase</keyword>
<keyword id="KW-0573">Peptidoglycan synthesis</keyword>
<keyword id="KW-1185">Reference proteome</keyword>
<keyword id="KW-0808">Transferase</keyword>
<feature type="chain" id="PRO_0000441269" description="N-acetylmuramate alpha-1-phosphate uridylyltransferase">
    <location>
        <begin position="1"/>
        <end position="223"/>
    </location>
</feature>
<feature type="binding site" evidence="2 7">
    <location>
        <begin position="11"/>
        <end position="13"/>
    </location>
    <ligand>
        <name>UTP</name>
        <dbReference type="ChEBI" id="CHEBI:46398"/>
    </ligand>
</feature>
<feature type="binding site" evidence="2 7">
    <location>
        <position position="23"/>
    </location>
    <ligand>
        <name>UTP</name>
        <dbReference type="ChEBI" id="CHEBI:46398"/>
    </ligand>
</feature>
<feature type="binding site" evidence="2 7 8">
    <location>
        <position position="105"/>
    </location>
    <ligand>
        <name>substrate</name>
    </ligand>
</feature>
<feature type="binding site" evidence="2">
    <location>
        <position position="107"/>
    </location>
    <ligand>
        <name>Mg(2+)</name>
        <dbReference type="ChEBI" id="CHEBI:18420"/>
    </ligand>
</feature>
<feature type="binding site" evidence="2 7 8">
    <location>
        <position position="140"/>
    </location>
    <ligand>
        <name>substrate</name>
    </ligand>
</feature>
<feature type="binding site" evidence="2">
    <location>
        <position position="205"/>
    </location>
    <ligand>
        <name>Mg(2+)</name>
        <dbReference type="ChEBI" id="CHEBI:18420"/>
    </ligand>
</feature>
<feature type="binding site" evidence="2 7 8">
    <location>
        <position position="205"/>
    </location>
    <ligand>
        <name>substrate</name>
    </ligand>
</feature>
<feature type="strand" evidence="9">
    <location>
        <begin position="3"/>
        <end position="6"/>
    </location>
</feature>
<feature type="helix" evidence="9">
    <location>
        <begin position="12"/>
        <end position="14"/>
    </location>
</feature>
<feature type="helix" evidence="9">
    <location>
        <begin position="17"/>
        <end position="19"/>
    </location>
</feature>
<feature type="helix" evidence="9">
    <location>
        <begin position="23"/>
        <end position="25"/>
    </location>
</feature>
<feature type="strand" evidence="9">
    <location>
        <begin position="26"/>
        <end position="32"/>
    </location>
</feature>
<feature type="helix" evidence="9">
    <location>
        <begin position="33"/>
        <end position="43"/>
    </location>
</feature>
<feature type="strand" evidence="9">
    <location>
        <begin position="48"/>
        <end position="53"/>
    </location>
</feature>
<feature type="helix" evidence="9">
    <location>
        <begin position="57"/>
        <end position="64"/>
    </location>
</feature>
<feature type="helix" evidence="9">
    <location>
        <begin position="68"/>
        <end position="70"/>
    </location>
</feature>
<feature type="strand" evidence="9">
    <location>
        <begin position="73"/>
        <end position="78"/>
    </location>
</feature>
<feature type="helix" evidence="9">
    <location>
        <begin position="84"/>
        <end position="96"/>
    </location>
</feature>
<feature type="strand" evidence="9">
    <location>
        <begin position="101"/>
        <end position="105"/>
    </location>
</feature>
<feature type="strand" evidence="9">
    <location>
        <begin position="108"/>
        <end position="110"/>
    </location>
</feature>
<feature type="helix" evidence="9">
    <location>
        <begin position="114"/>
        <end position="118"/>
    </location>
</feature>
<feature type="strand" evidence="9">
    <location>
        <begin position="123"/>
        <end position="130"/>
    </location>
</feature>
<feature type="strand" evidence="9">
    <location>
        <begin position="140"/>
        <end position="144"/>
    </location>
</feature>
<feature type="strand" evidence="9">
    <location>
        <begin position="147"/>
        <end position="150"/>
    </location>
</feature>
<feature type="strand" evidence="9">
    <location>
        <begin position="153"/>
        <end position="156"/>
    </location>
</feature>
<feature type="strand" evidence="9">
    <location>
        <begin position="158"/>
        <end position="166"/>
    </location>
</feature>
<feature type="helix" evidence="9">
    <location>
        <begin position="168"/>
        <end position="171"/>
    </location>
</feature>
<feature type="strand" evidence="9">
    <location>
        <begin position="176"/>
        <end position="178"/>
    </location>
</feature>
<feature type="helix" evidence="9">
    <location>
        <begin position="182"/>
        <end position="190"/>
    </location>
</feature>
<feature type="strand" evidence="9">
    <location>
        <begin position="194"/>
        <end position="198"/>
    </location>
</feature>
<feature type="strand" evidence="9">
    <location>
        <begin position="203"/>
        <end position="205"/>
    </location>
</feature>
<feature type="helix" evidence="9">
    <location>
        <begin position="209"/>
        <end position="223"/>
    </location>
</feature>
<evidence type="ECO:0000269" key="1">
    <source>
    </source>
</evidence>
<evidence type="ECO:0000269" key="2">
    <source>
    </source>
</evidence>
<evidence type="ECO:0000303" key="3">
    <source>
    </source>
</evidence>
<evidence type="ECO:0000305" key="4"/>
<evidence type="ECO:0000312" key="5">
    <source>
        <dbReference type="EMBL" id="AAN66036.1"/>
    </source>
</evidence>
<evidence type="ECO:0007744" key="6">
    <source>
        <dbReference type="PDB" id="4Y7T"/>
    </source>
</evidence>
<evidence type="ECO:0007744" key="7">
    <source>
        <dbReference type="PDB" id="4Y7U"/>
    </source>
</evidence>
<evidence type="ECO:0007744" key="8">
    <source>
        <dbReference type="PDB" id="4Y7V"/>
    </source>
</evidence>
<evidence type="ECO:0007829" key="9">
    <source>
        <dbReference type="PDB" id="4Y7U"/>
    </source>
</evidence>
<comment type="function">
    <text evidence="1 2">Catalyzes the formation of UDP-N-acetylmuramate (UDP-MurNAc), a crucial precursor of the bacterial peptidoglycan cell wall, from UTP and MurNAc-alpha-1P (PubMed:23831760, PubMed:25767118). Is involved in peptidoglycan recycling as part of a cell wall recycling pathway that bypasses de novo biosynthesis of the peptidoglycan precursor UDP-MurNAc (PubMed:23831760). Plays a role in intrinsic resistance to fosfomycin, which targets the de novo synthesis of UDP-MurNAc (PubMed:23831760). Is not able to use GlcNAc-alpha-1P and GalNAc-alpha-1P as substrates (PubMed:23831760). Cannot accept other nucleotide triphosphates (ATP, CTP, TTP, or GTP) than UTP (PubMed:25767118).</text>
</comment>
<comment type="catalytic activity">
    <reaction evidence="1 2">
        <text>N-acetyl-alpha-D-muramate 1-phosphate + UDP + H(+) = UDP-N-acetyl-alpha-D-muramate + phosphate</text>
        <dbReference type="Rhea" id="RHEA:53716"/>
        <dbReference type="ChEBI" id="CHEBI:15378"/>
        <dbReference type="ChEBI" id="CHEBI:43474"/>
        <dbReference type="ChEBI" id="CHEBI:58223"/>
        <dbReference type="ChEBI" id="CHEBI:70757"/>
        <dbReference type="ChEBI" id="CHEBI:137594"/>
        <dbReference type="EC" id="2.7.7.99"/>
    </reaction>
</comment>
<comment type="cofactor">
    <cofactor evidence="2">
        <name>Mg(2+)</name>
        <dbReference type="ChEBI" id="CHEBI:18420"/>
    </cofactor>
</comment>
<comment type="activity regulation">
    <text evidence="2">Is completely inhibited by EDTA in vitro.</text>
</comment>
<comment type="pathway">
    <text evidence="1">Cell wall biogenesis; peptidoglycan recycling.</text>
</comment>
<comment type="subunit">
    <text evidence="2">Monomer.</text>
</comment>
<comment type="disruption phenotype">
    <text evidence="1">Cells lacking this gene accumulate MurNAc phosphate. Deletion of this gene increases fosfomycin sensitivity.</text>
</comment>
<comment type="similarity">
    <text evidence="4">Belongs to the nucleotidyltransferase MurU family.</text>
</comment>
<name>MURU_PSEPK</name>
<reference key="1">
    <citation type="journal article" date="2002" name="Environ. Microbiol.">
        <title>Complete genome sequence and comparative analysis of the metabolically versatile Pseudomonas putida KT2440.</title>
        <authorList>
            <person name="Nelson K.E."/>
            <person name="Weinel C."/>
            <person name="Paulsen I.T."/>
            <person name="Dodson R.J."/>
            <person name="Hilbert H."/>
            <person name="Martins dos Santos V.A.P."/>
            <person name="Fouts D.E."/>
            <person name="Gill S.R."/>
            <person name="Pop M."/>
            <person name="Holmes M."/>
            <person name="Brinkac L.M."/>
            <person name="Beanan M.J."/>
            <person name="DeBoy R.T."/>
            <person name="Daugherty S.C."/>
            <person name="Kolonay J.F."/>
            <person name="Madupu R."/>
            <person name="Nelson W.C."/>
            <person name="White O."/>
            <person name="Peterson J.D."/>
            <person name="Khouri H.M."/>
            <person name="Hance I."/>
            <person name="Chris Lee P."/>
            <person name="Holtzapple E.K."/>
            <person name="Scanlan D."/>
            <person name="Tran K."/>
            <person name="Moazzez A."/>
            <person name="Utterback T.R."/>
            <person name="Rizzo M."/>
            <person name="Lee K."/>
            <person name="Kosack D."/>
            <person name="Moestl D."/>
            <person name="Wedler H."/>
            <person name="Lauber J."/>
            <person name="Stjepandic D."/>
            <person name="Hoheisel J."/>
            <person name="Straetz M."/>
            <person name="Heim S."/>
            <person name="Kiewitz C."/>
            <person name="Eisen J.A."/>
            <person name="Timmis K.N."/>
            <person name="Duesterhoeft A."/>
            <person name="Tuemmler B."/>
            <person name="Fraser C.M."/>
        </authorList>
    </citation>
    <scope>NUCLEOTIDE SEQUENCE [LARGE SCALE GENOMIC DNA]</scope>
    <source>
        <strain>ATCC 47054 / DSM 6125 / CFBP 8728 / NCIMB 11950 / KT2440</strain>
    </source>
</reference>
<reference key="2">
    <citation type="journal article" date="2013" name="Nat. Chem. Biol.">
        <title>A cell wall recycling shortcut that bypasses peptidoglycan de novo biosynthesis.</title>
        <authorList>
            <person name="Gisin J."/>
            <person name="Schneider A."/>
            <person name="Naegele B."/>
            <person name="Borisova M."/>
            <person name="Mayer C."/>
        </authorList>
    </citation>
    <scope>FUNCTION</scope>
    <scope>CATALYTIC ACTIVITY</scope>
    <scope>SUBSTRATE SPECIFICITY</scope>
    <scope>DISRUPTION PHENOTYPE</scope>
    <scope>PATHWAY</scope>
</reference>
<reference evidence="6 7 8" key="3">
    <citation type="journal article" date="2015" name="J. Biol. Chem.">
        <title>Crystal structure of the N-acetylmuramic acid alpha-1-phosphate (MurNAc-alpha1-P) uridylyltransferase MurU, a minimal sugar nucleotidyltransferase and potential drug target enzyme in Gram-negative pathogens.</title>
        <authorList>
            <person name="Renner-Schneck M."/>
            <person name="Hinderberger I."/>
            <person name="Gisin J."/>
            <person name="Exner T."/>
            <person name="Mayer C."/>
            <person name="Stehle T."/>
        </authorList>
    </citation>
    <scope>X-RAY CRYSTALLOGRAPHY (1.80 ANGSTROMS) OF NATIVE ENZYME AND IN COMPLEXES WITH MURNAC-ALPHA1-P; UTP ANALOGS AND MAGNESIUM</scope>
    <scope>FUNCTION</scope>
    <scope>CATALYTIC ACTIVITY</scope>
    <scope>SUBSTRATE SPECIFICITY</scope>
    <scope>COFACTOR</scope>
    <scope>ACTIVITY REGULATION</scope>
    <scope>SUBUNIT</scope>
</reference>
<gene>
    <name evidence="3" type="primary">murU</name>
    <name evidence="5" type="ordered locus">PP_0406</name>
</gene>
<organism>
    <name type="scientific">Pseudomonas putida (strain ATCC 47054 / DSM 6125 / CFBP 8728 / NCIMB 11950 / KT2440)</name>
    <dbReference type="NCBI Taxonomy" id="160488"/>
    <lineage>
        <taxon>Bacteria</taxon>
        <taxon>Pseudomonadati</taxon>
        <taxon>Pseudomonadota</taxon>
        <taxon>Gammaproteobacteria</taxon>
        <taxon>Pseudomonadales</taxon>
        <taxon>Pseudomonadaceae</taxon>
        <taxon>Pseudomonas</taxon>
    </lineage>
</organism>
<accession>Q88QT2</accession>
<accession>A0A0J9X280</accession>